<comment type="function">
    <text evidence="1">Catalyzes the dephosphorylation of inositol 1-phosphate (I-1-P) to yield free myo-inositol, a key metabolite in mycobacteria.</text>
</comment>
<comment type="catalytic activity">
    <reaction>
        <text>a myo-inositol phosphate + H2O = myo-inositol + phosphate</text>
        <dbReference type="Rhea" id="RHEA:24056"/>
        <dbReference type="ChEBI" id="CHEBI:15377"/>
        <dbReference type="ChEBI" id="CHEBI:17268"/>
        <dbReference type="ChEBI" id="CHEBI:43474"/>
        <dbReference type="ChEBI" id="CHEBI:84139"/>
        <dbReference type="EC" id="3.1.3.25"/>
    </reaction>
</comment>
<comment type="cofactor">
    <cofactor evidence="1">
        <name>Mg(2+)</name>
        <dbReference type="ChEBI" id="CHEBI:18420"/>
    </cofactor>
</comment>
<comment type="pathway">
    <text>Polyol metabolism; myo-inositol biosynthesis; myo-inositol from D-glucose 6-phosphate: step 2/2.</text>
</comment>
<comment type="subunit">
    <text evidence="1">Homodimer.</text>
</comment>
<comment type="similarity">
    <text evidence="2">Belongs to the inositol monophosphatase superfamily.</text>
</comment>
<comment type="sequence caution" evidence="2">
    <conflict type="erroneous initiation">
        <sequence resource="EMBL-CDS" id="AAK47090"/>
    </conflict>
    <text>Truncated N-terminus.</text>
</comment>
<sequence>MTRPDNEPARLRSVAENLAAEAAAFVRGRRAEVFGISRAGDGDGAVRAKSSPTDPVTVVDTDTERLLRDRLAQLRPGDPILGEEGGGPADVTATPSDRVTWVLDPIDGTVNFVYGIPAYAVSIGAQVGGITVAGAVADVAARTVYSAATGLGAHLTDERGRHVLRCTGVDELSMALLGTGFGYSVRCREKQAELLAHVVPLVRDVRRIGSAALDLCMVAAGRLDAYYEHGVQVWDCAAGALIAAEAGARVLLSTPRAGGAGLVVVAAAPGIADELLAALQRFNGLEPIPD</sequence>
<evidence type="ECO:0000250" key="1"/>
<evidence type="ECO:0000305" key="2"/>
<dbReference type="EC" id="3.1.3.25"/>
<dbReference type="EMBL" id="AE000516">
    <property type="protein sequence ID" value="AAK47090.1"/>
    <property type="status" value="ALT_INIT"/>
    <property type="molecule type" value="Genomic_DNA"/>
</dbReference>
<dbReference type="PIR" id="H70530">
    <property type="entry name" value="H70530"/>
</dbReference>
<dbReference type="RefSeq" id="WP_003413939.1">
    <property type="nucleotide sequence ID" value="NZ_KK341227.1"/>
</dbReference>
<dbReference type="SMR" id="P9WKI8"/>
<dbReference type="GeneID" id="45426689"/>
<dbReference type="KEGG" id="mtc:MT2775"/>
<dbReference type="PATRIC" id="fig|83331.31.peg.2988"/>
<dbReference type="HOGENOM" id="CLU_044118_0_1_11"/>
<dbReference type="UniPathway" id="UPA00823">
    <property type="reaction ID" value="UER00788"/>
</dbReference>
<dbReference type="Proteomes" id="UP000001020">
    <property type="component" value="Chromosome"/>
</dbReference>
<dbReference type="GO" id="GO:0008934">
    <property type="term" value="F:inositol monophosphate 1-phosphatase activity"/>
    <property type="evidence" value="ECO:0007669"/>
    <property type="project" value="InterPro"/>
</dbReference>
<dbReference type="GO" id="GO:0046872">
    <property type="term" value="F:metal ion binding"/>
    <property type="evidence" value="ECO:0007669"/>
    <property type="project" value="UniProtKB-KW"/>
</dbReference>
<dbReference type="GO" id="GO:0006021">
    <property type="term" value="P:inositol biosynthetic process"/>
    <property type="evidence" value="ECO:0007669"/>
    <property type="project" value="UniProtKB-UniPathway"/>
</dbReference>
<dbReference type="GO" id="GO:0046854">
    <property type="term" value="P:phosphatidylinositol phosphate biosynthetic process"/>
    <property type="evidence" value="ECO:0007669"/>
    <property type="project" value="InterPro"/>
</dbReference>
<dbReference type="GO" id="GO:0007165">
    <property type="term" value="P:signal transduction"/>
    <property type="evidence" value="ECO:0007669"/>
    <property type="project" value="TreeGrafter"/>
</dbReference>
<dbReference type="CDD" id="cd01639">
    <property type="entry name" value="IMPase"/>
    <property type="match status" value="1"/>
</dbReference>
<dbReference type="FunFam" id="3.40.190.80:FF:000022">
    <property type="entry name" value="Inositol-1-monophosphatase"/>
    <property type="match status" value="1"/>
</dbReference>
<dbReference type="Gene3D" id="3.40.190.80">
    <property type="match status" value="1"/>
</dbReference>
<dbReference type="Gene3D" id="3.30.540.10">
    <property type="entry name" value="Fructose-1,6-Bisphosphatase, subunit A, domain 1"/>
    <property type="match status" value="1"/>
</dbReference>
<dbReference type="InterPro" id="IPR033942">
    <property type="entry name" value="IMPase"/>
</dbReference>
<dbReference type="InterPro" id="IPR020583">
    <property type="entry name" value="Inositol_monoP_metal-BS"/>
</dbReference>
<dbReference type="InterPro" id="IPR000760">
    <property type="entry name" value="Inositol_monophosphatase-like"/>
</dbReference>
<dbReference type="InterPro" id="IPR020550">
    <property type="entry name" value="Inositol_monophosphatase_CS"/>
</dbReference>
<dbReference type="PANTHER" id="PTHR20854">
    <property type="entry name" value="INOSITOL MONOPHOSPHATASE"/>
    <property type="match status" value="1"/>
</dbReference>
<dbReference type="PANTHER" id="PTHR20854:SF4">
    <property type="entry name" value="INOSITOL-1-MONOPHOSPHATASE-RELATED"/>
    <property type="match status" value="1"/>
</dbReference>
<dbReference type="Pfam" id="PF00459">
    <property type="entry name" value="Inositol_P"/>
    <property type="match status" value="1"/>
</dbReference>
<dbReference type="PRINTS" id="PR00377">
    <property type="entry name" value="IMPHPHTASES"/>
</dbReference>
<dbReference type="SUPFAM" id="SSF56655">
    <property type="entry name" value="Carbohydrate phosphatase"/>
    <property type="match status" value="1"/>
</dbReference>
<dbReference type="PROSITE" id="PS00629">
    <property type="entry name" value="IMP_1"/>
    <property type="match status" value="1"/>
</dbReference>
<dbReference type="PROSITE" id="PS00630">
    <property type="entry name" value="IMP_2"/>
    <property type="match status" value="1"/>
</dbReference>
<proteinExistence type="inferred from homology"/>
<protein>
    <recommendedName>
        <fullName>Inositol-1-monophosphatase SuhB</fullName>
        <shortName>I-1-Pase</shortName>
        <shortName>IMPase</shortName>
        <shortName>Inositol-1-phosphatase</shortName>
        <ecNumber>3.1.3.25</ecNumber>
    </recommendedName>
</protein>
<reference key="1">
    <citation type="journal article" date="2002" name="J. Bacteriol.">
        <title>Whole-genome comparison of Mycobacterium tuberculosis clinical and laboratory strains.</title>
        <authorList>
            <person name="Fleischmann R.D."/>
            <person name="Alland D."/>
            <person name="Eisen J.A."/>
            <person name="Carpenter L."/>
            <person name="White O."/>
            <person name="Peterson J.D."/>
            <person name="DeBoy R.T."/>
            <person name="Dodson R.J."/>
            <person name="Gwinn M.L."/>
            <person name="Haft D.H."/>
            <person name="Hickey E.K."/>
            <person name="Kolonay J.F."/>
            <person name="Nelson W.C."/>
            <person name="Umayam L.A."/>
            <person name="Ermolaeva M.D."/>
            <person name="Salzberg S.L."/>
            <person name="Delcher A."/>
            <person name="Utterback T.R."/>
            <person name="Weidman J.F."/>
            <person name="Khouri H.M."/>
            <person name="Gill J."/>
            <person name="Mikula A."/>
            <person name="Bishai W."/>
            <person name="Jacobs W.R. Jr."/>
            <person name="Venter J.C."/>
            <person name="Fraser C.M."/>
        </authorList>
    </citation>
    <scope>NUCLEOTIDE SEQUENCE [LARGE SCALE GENOMIC DNA]</scope>
    <source>
        <strain>CDC 1551 / Oshkosh</strain>
    </source>
</reference>
<accession>P9WKI8</accession>
<accession>L0TC07</accession>
<accession>O07203</accession>
<accession>P65165</accession>
<feature type="chain" id="PRO_0000427646" description="Inositol-1-monophosphatase SuhB">
    <location>
        <begin position="1"/>
        <end position="290"/>
    </location>
</feature>
<feature type="binding site" evidence="1">
    <location>
        <position position="83"/>
    </location>
    <ligand>
        <name>Mg(2+)</name>
        <dbReference type="ChEBI" id="CHEBI:18420"/>
        <label>1</label>
    </ligand>
</feature>
<feature type="binding site" evidence="1">
    <location>
        <position position="83"/>
    </location>
    <ligand>
        <name>substrate</name>
    </ligand>
</feature>
<feature type="binding site" evidence="1">
    <location>
        <position position="104"/>
    </location>
    <ligand>
        <name>Mg(2+)</name>
        <dbReference type="ChEBI" id="CHEBI:18420"/>
        <label>1</label>
    </ligand>
</feature>
<feature type="binding site" evidence="1">
    <location>
        <position position="104"/>
    </location>
    <ligand>
        <name>Mg(2+)</name>
        <dbReference type="ChEBI" id="CHEBI:18420"/>
        <label>2</label>
    </ligand>
</feature>
<feature type="binding site" evidence="1">
    <location>
        <begin position="106"/>
        <end position="109"/>
    </location>
    <ligand>
        <name>substrate</name>
    </ligand>
</feature>
<feature type="binding site" evidence="1">
    <location>
        <position position="106"/>
    </location>
    <ligand>
        <name>Mg(2+)</name>
        <dbReference type="ChEBI" id="CHEBI:18420"/>
        <label>1</label>
    </ligand>
</feature>
<feature type="binding site" evidence="1">
    <location>
        <position position="107"/>
    </location>
    <ligand>
        <name>Mg(2+)</name>
        <dbReference type="ChEBI" id="CHEBI:18420"/>
        <label>2</label>
    </ligand>
</feature>
<feature type="binding site" evidence="1">
    <location>
        <position position="206"/>
    </location>
    <ligand>
        <name>substrate</name>
    </ligand>
</feature>
<feature type="binding site" evidence="1">
    <location>
        <position position="235"/>
    </location>
    <ligand>
        <name>Mg(2+)</name>
        <dbReference type="ChEBI" id="CHEBI:18420"/>
        <label>2</label>
    </ligand>
</feature>
<feature type="binding site" evidence="1">
    <location>
        <position position="235"/>
    </location>
    <ligand>
        <name>substrate</name>
    </ligand>
</feature>
<gene>
    <name type="primary">suhB</name>
    <name type="ordered locus">MT2775</name>
</gene>
<name>SUHB_MYCTO</name>
<keyword id="KW-0378">Hydrolase</keyword>
<keyword id="KW-0460">Magnesium</keyword>
<keyword id="KW-0479">Metal-binding</keyword>
<keyword id="KW-1185">Reference proteome</keyword>
<organism>
    <name type="scientific">Mycobacterium tuberculosis (strain CDC 1551 / Oshkosh)</name>
    <dbReference type="NCBI Taxonomy" id="83331"/>
    <lineage>
        <taxon>Bacteria</taxon>
        <taxon>Bacillati</taxon>
        <taxon>Actinomycetota</taxon>
        <taxon>Actinomycetes</taxon>
        <taxon>Mycobacteriales</taxon>
        <taxon>Mycobacteriaceae</taxon>
        <taxon>Mycobacterium</taxon>
        <taxon>Mycobacterium tuberculosis complex</taxon>
    </lineage>
</organism>